<dbReference type="EC" id="3.2.1.67"/>
<dbReference type="EMBL" id="EQ963485">
    <property type="protein sequence ID" value="EED46018.1"/>
    <property type="molecule type" value="Genomic_DNA"/>
</dbReference>
<dbReference type="RefSeq" id="XP_002384954.1">
    <property type="nucleotide sequence ID" value="XM_002384913.1"/>
</dbReference>
<dbReference type="SMR" id="B8NX60"/>
<dbReference type="STRING" id="332952.B8NX60"/>
<dbReference type="GlyCosmos" id="B8NX60">
    <property type="glycosylation" value="10 sites, No reported glycans"/>
</dbReference>
<dbReference type="EnsemblFungi" id="EED46018">
    <property type="protein sequence ID" value="EED46018"/>
    <property type="gene ID" value="AFLA_122480"/>
</dbReference>
<dbReference type="VEuPathDB" id="FungiDB:AFLA_014255"/>
<dbReference type="eggNOG" id="ENOG502QPPR">
    <property type="taxonomic scope" value="Eukaryota"/>
</dbReference>
<dbReference type="HOGENOM" id="CLU_016031_1_0_1"/>
<dbReference type="OMA" id="GYTSGKY"/>
<dbReference type="GO" id="GO:0005576">
    <property type="term" value="C:extracellular region"/>
    <property type="evidence" value="ECO:0000250"/>
    <property type="project" value="UniProtKB"/>
</dbReference>
<dbReference type="GO" id="GO:0047911">
    <property type="term" value="F:galacturan 1,4-alpha-galacturonidase activity"/>
    <property type="evidence" value="ECO:0007669"/>
    <property type="project" value="UniProtKB-EC"/>
</dbReference>
<dbReference type="GO" id="GO:0004650">
    <property type="term" value="F:polygalacturonase activity"/>
    <property type="evidence" value="ECO:0000250"/>
    <property type="project" value="UniProtKB"/>
</dbReference>
<dbReference type="GO" id="GO:0071555">
    <property type="term" value="P:cell wall organization"/>
    <property type="evidence" value="ECO:0007669"/>
    <property type="project" value="UniProtKB-KW"/>
</dbReference>
<dbReference type="GO" id="GO:0045490">
    <property type="term" value="P:pectin catabolic process"/>
    <property type="evidence" value="ECO:0000250"/>
    <property type="project" value="UniProtKB"/>
</dbReference>
<dbReference type="FunFam" id="2.160.20.10:FF:000040">
    <property type="entry name" value="Probable exopolygalacturonase B"/>
    <property type="match status" value="1"/>
</dbReference>
<dbReference type="Gene3D" id="2.160.20.10">
    <property type="entry name" value="Single-stranded right-handed beta-helix, Pectin lyase-like"/>
    <property type="match status" value="1"/>
</dbReference>
<dbReference type="InterPro" id="IPR000743">
    <property type="entry name" value="Glyco_hydro_28"/>
</dbReference>
<dbReference type="InterPro" id="IPR012334">
    <property type="entry name" value="Pectin_lyas_fold"/>
</dbReference>
<dbReference type="InterPro" id="IPR011050">
    <property type="entry name" value="Pectin_lyase_fold/virulence"/>
</dbReference>
<dbReference type="PANTHER" id="PTHR31736">
    <property type="match status" value="1"/>
</dbReference>
<dbReference type="PANTHER" id="PTHR31736:SF6">
    <property type="entry name" value="EXOPOLYGALACTURONASE B-RELATED"/>
    <property type="match status" value="1"/>
</dbReference>
<dbReference type="Pfam" id="PF00295">
    <property type="entry name" value="Glyco_hydro_28"/>
    <property type="match status" value="1"/>
</dbReference>
<dbReference type="SUPFAM" id="SSF51126">
    <property type="entry name" value="Pectin lyase-like"/>
    <property type="match status" value="1"/>
</dbReference>
<protein>
    <recommendedName>
        <fullName>Probable exopolygalacturonase B</fullName>
        <ecNumber>3.2.1.67</ecNumber>
    </recommendedName>
    <alternativeName>
        <fullName>Galacturan 1,4-alpha-galacturonidase B</fullName>
    </alternativeName>
    <alternativeName>
        <fullName>Poly(1,4-alpha-D-galacturonide)galacturonohydrolase B</fullName>
    </alternativeName>
</protein>
<gene>
    <name type="primary">pgxB</name>
    <name type="ORF">AFLA_122480</name>
</gene>
<accession>B8NX60</accession>
<keyword id="KW-0961">Cell wall biogenesis/degradation</keyword>
<keyword id="KW-1015">Disulfide bond</keyword>
<keyword id="KW-0325">Glycoprotein</keyword>
<keyword id="KW-0326">Glycosidase</keyword>
<keyword id="KW-0378">Hydrolase</keyword>
<keyword id="KW-0677">Repeat</keyword>
<keyword id="KW-0964">Secreted</keyword>
<keyword id="KW-0732">Signal</keyword>
<proteinExistence type="inferred from homology"/>
<name>PGXB_ASPFN</name>
<feature type="signal peptide" evidence="2">
    <location>
        <begin position="1"/>
        <end position="15"/>
    </location>
</feature>
<feature type="chain" id="PRO_0000393676" description="Probable exopolygalacturonase B">
    <location>
        <begin position="16"/>
        <end position="435"/>
    </location>
</feature>
<feature type="repeat" description="PbH1 1">
    <location>
        <begin position="208"/>
        <end position="239"/>
    </location>
</feature>
<feature type="repeat" description="PbH1 2">
    <location>
        <begin position="240"/>
        <end position="261"/>
    </location>
</feature>
<feature type="repeat" description="PbH1 3">
    <location>
        <begin position="262"/>
        <end position="283"/>
    </location>
</feature>
<feature type="repeat" description="PbH1 4">
    <location>
        <begin position="294"/>
        <end position="315"/>
    </location>
</feature>
<feature type="repeat" description="PbH1 5">
    <location>
        <begin position="326"/>
        <end position="347"/>
    </location>
</feature>
<feature type="repeat" description="PbH1 6">
    <location>
        <begin position="366"/>
        <end position="388"/>
    </location>
</feature>
<feature type="active site" description="Proton donor" evidence="1">
    <location>
        <position position="254"/>
    </location>
</feature>
<feature type="active site" evidence="1">
    <location>
        <position position="277"/>
    </location>
</feature>
<feature type="glycosylation site" description="N-linked (GlcNAc...) asparagine" evidence="2">
    <location>
        <position position="59"/>
    </location>
</feature>
<feature type="glycosylation site" description="N-linked (GlcNAc...) asparagine" evidence="2">
    <location>
        <position position="184"/>
    </location>
</feature>
<feature type="glycosylation site" description="N-linked (GlcNAc...) asparagine" evidence="2">
    <location>
        <position position="224"/>
    </location>
</feature>
<feature type="glycosylation site" description="N-linked (GlcNAc...) asparagine" evidence="2">
    <location>
        <position position="262"/>
    </location>
</feature>
<feature type="glycosylation site" description="N-linked (GlcNAc...) asparagine" evidence="2">
    <location>
        <position position="274"/>
    </location>
</feature>
<feature type="glycosylation site" description="N-linked (GlcNAc...) asparagine" evidence="2">
    <location>
        <position position="301"/>
    </location>
</feature>
<feature type="glycosylation site" description="N-linked (GlcNAc...) asparagine" evidence="2">
    <location>
        <position position="328"/>
    </location>
</feature>
<feature type="glycosylation site" description="N-linked (GlcNAc...) asparagine" evidence="2">
    <location>
        <position position="365"/>
    </location>
</feature>
<feature type="glycosylation site" description="N-linked (GlcNAc...) asparagine" evidence="2">
    <location>
        <position position="373"/>
    </location>
</feature>
<feature type="glycosylation site" description="N-linked (GlcNAc...) asparagine" evidence="2">
    <location>
        <position position="406"/>
    </location>
</feature>
<feature type="disulfide bond" evidence="1">
    <location>
        <begin position="256"/>
        <end position="273"/>
    </location>
</feature>
<feature type="disulfide bond" evidence="1">
    <location>
        <begin position="391"/>
        <end position="397"/>
    </location>
</feature>
<sequence length="435" mass="48372">MKFFLATLFASAVSSIAVDRLIPGAQIIPESDTRALLRVGGHHDKYHDRRTITIRPSRNDTDDVSRDFLWGIKHANHGGRLLLKKGEKYVIGRKLDLTFLDDIEVQLDGELKFTDDVSYWQENNFYYDFQKSITFWRWGGKDIKIFGTGLLNGNGQRWYNEFAGQEILDPDNEYYRPILFLTENATRISVEGITQLNSPCWTNFFIQSKDVSFDDVYIHAFSTNKSALPKNSDGFDSLNVDGLTVTNTRVDVGDDCFSPKPNTTNIFVQNLLCNNTHGVSMGSIGQYPGVMDIIEHAYIENVTLLNGQNGARLKAWAGQDVGYGRINNITYKNIRIENTDAPVVLDQCYFDIEAAECAQYPSQVNVTNILFENISGTSSGKNGKVVADLVCSPNAVCSDIQLKNINLTSPAGSPPEIVCEGVQGDIGVECQASAD</sequence>
<evidence type="ECO:0000250" key="1"/>
<evidence type="ECO:0000255" key="2"/>
<evidence type="ECO:0000305" key="3"/>
<comment type="function">
    <text evidence="1">Specific in hydrolyzing the terminal glycosidic bond of polygalacturonic acid and oligogalacturonates.</text>
</comment>
<comment type="catalytic activity">
    <reaction>
        <text>[(1-&gt;4)-alpha-D-galacturonosyl](n) + H2O = alpha-D-galacturonate + [(1-&gt;4)-alpha-D-galacturonosyl](n-1)</text>
        <dbReference type="Rhea" id="RHEA:14117"/>
        <dbReference type="Rhea" id="RHEA-COMP:14570"/>
        <dbReference type="Rhea" id="RHEA-COMP:14572"/>
        <dbReference type="ChEBI" id="CHEBI:15377"/>
        <dbReference type="ChEBI" id="CHEBI:58658"/>
        <dbReference type="ChEBI" id="CHEBI:140523"/>
        <dbReference type="EC" id="3.2.1.67"/>
    </reaction>
</comment>
<comment type="subcellular location">
    <subcellularLocation>
        <location evidence="1">Secreted</location>
    </subcellularLocation>
</comment>
<comment type="similarity">
    <text evidence="3">Belongs to the glycosyl hydrolase 28 family.</text>
</comment>
<organism>
    <name type="scientific">Aspergillus flavus (strain ATCC 200026 / FGSC A1120 / IAM 13836 / NRRL 3357 / JCM 12722 / SRRC 167)</name>
    <dbReference type="NCBI Taxonomy" id="332952"/>
    <lineage>
        <taxon>Eukaryota</taxon>
        <taxon>Fungi</taxon>
        <taxon>Dikarya</taxon>
        <taxon>Ascomycota</taxon>
        <taxon>Pezizomycotina</taxon>
        <taxon>Eurotiomycetes</taxon>
        <taxon>Eurotiomycetidae</taxon>
        <taxon>Eurotiales</taxon>
        <taxon>Aspergillaceae</taxon>
        <taxon>Aspergillus</taxon>
        <taxon>Aspergillus subgen. Circumdati</taxon>
    </lineage>
</organism>
<reference key="1">
    <citation type="journal article" date="2015" name="Genome Announc.">
        <title>Genome sequence of Aspergillus flavus NRRL 3357, a strain that causes aflatoxin contamination of food and feed.</title>
        <authorList>
            <person name="Nierman W.C."/>
            <person name="Yu J."/>
            <person name="Fedorova-Abrams N.D."/>
            <person name="Losada L."/>
            <person name="Cleveland T.E."/>
            <person name="Bhatnagar D."/>
            <person name="Bennett J.W."/>
            <person name="Dean R."/>
            <person name="Payne G.A."/>
        </authorList>
    </citation>
    <scope>NUCLEOTIDE SEQUENCE [LARGE SCALE GENOMIC DNA]</scope>
    <source>
        <strain>ATCC 200026 / FGSC A1120 / IAM 13836 / NRRL 3357 / JCM 12722 / SRRC 167</strain>
    </source>
</reference>